<reference key="1">
    <citation type="submission" date="2008-02" db="EMBL/GenBank/DDBJ databases">
        <title>Complete sequence of Escherichia coli C str. ATCC 8739.</title>
        <authorList>
            <person name="Copeland A."/>
            <person name="Lucas S."/>
            <person name="Lapidus A."/>
            <person name="Glavina del Rio T."/>
            <person name="Dalin E."/>
            <person name="Tice H."/>
            <person name="Bruce D."/>
            <person name="Goodwin L."/>
            <person name="Pitluck S."/>
            <person name="Kiss H."/>
            <person name="Brettin T."/>
            <person name="Detter J.C."/>
            <person name="Han C."/>
            <person name="Kuske C.R."/>
            <person name="Schmutz J."/>
            <person name="Larimer F."/>
            <person name="Land M."/>
            <person name="Hauser L."/>
            <person name="Kyrpides N."/>
            <person name="Mikhailova N."/>
            <person name="Ingram L."/>
            <person name="Richardson P."/>
        </authorList>
    </citation>
    <scope>NUCLEOTIDE SEQUENCE [LARGE SCALE GENOMIC DNA]</scope>
    <source>
        <strain>ATCC 8739 / DSM 1576 / NBRC 3972 / NCIMB 8545 / WDCM 00012 / Crooks</strain>
    </source>
</reference>
<gene>
    <name evidence="1" type="primary">tusB</name>
    <name type="ordered locus">EcolC_0370</name>
</gene>
<comment type="function">
    <text evidence="1">Part of a sulfur-relay system required for 2-thiolation of 5-methylaminomethyl-2-thiouridine (mnm(5)s(2)U) at tRNA wobble positions.</text>
</comment>
<comment type="subunit">
    <text evidence="1">Heterohexamer, formed by a dimer of trimers. The hexameric TusBCD complex contains 2 copies each of TusB, TusC and TusD. The TusBCD complex interacts with TusE.</text>
</comment>
<comment type="subcellular location">
    <subcellularLocation>
        <location evidence="1">Cytoplasm</location>
    </subcellularLocation>
</comment>
<comment type="similarity">
    <text evidence="1">Belongs to the DsrH/TusB family.</text>
</comment>
<name>TUSB_ECOLC</name>
<proteinExistence type="inferred from homology"/>
<organism>
    <name type="scientific">Escherichia coli (strain ATCC 8739 / DSM 1576 / NBRC 3972 / NCIMB 8545 / WDCM 00012 / Crooks)</name>
    <dbReference type="NCBI Taxonomy" id="481805"/>
    <lineage>
        <taxon>Bacteria</taxon>
        <taxon>Pseudomonadati</taxon>
        <taxon>Pseudomonadota</taxon>
        <taxon>Gammaproteobacteria</taxon>
        <taxon>Enterobacterales</taxon>
        <taxon>Enterobacteriaceae</taxon>
        <taxon>Escherichia</taxon>
    </lineage>
</organism>
<dbReference type="EMBL" id="CP000946">
    <property type="protein sequence ID" value="ACA76048.1"/>
    <property type="molecule type" value="Genomic_DNA"/>
</dbReference>
<dbReference type="RefSeq" id="WP_000903374.1">
    <property type="nucleotide sequence ID" value="NZ_MTFT01000001.1"/>
</dbReference>
<dbReference type="SMR" id="B1IPV6"/>
<dbReference type="KEGG" id="ecl:EcolC_0370"/>
<dbReference type="HOGENOM" id="CLU_166087_2_1_6"/>
<dbReference type="GO" id="GO:1990228">
    <property type="term" value="C:sulfurtransferase complex"/>
    <property type="evidence" value="ECO:0007669"/>
    <property type="project" value="TreeGrafter"/>
</dbReference>
<dbReference type="GO" id="GO:0002143">
    <property type="term" value="P:tRNA wobble position uridine thiolation"/>
    <property type="evidence" value="ECO:0007669"/>
    <property type="project" value="InterPro"/>
</dbReference>
<dbReference type="FunFam" id="3.40.1260.10:FF:000002">
    <property type="entry name" value="Sulfurtransferase TusB"/>
    <property type="match status" value="1"/>
</dbReference>
<dbReference type="Gene3D" id="3.40.1260.10">
    <property type="entry name" value="DsrEFH-like"/>
    <property type="match status" value="1"/>
</dbReference>
<dbReference type="HAMAP" id="MF_01564">
    <property type="entry name" value="Thiourid_synth_B"/>
    <property type="match status" value="1"/>
</dbReference>
<dbReference type="InterPro" id="IPR027396">
    <property type="entry name" value="DsrEFH-like"/>
</dbReference>
<dbReference type="InterPro" id="IPR023526">
    <property type="entry name" value="Sulphur_relay_TusB"/>
</dbReference>
<dbReference type="InterPro" id="IPR007215">
    <property type="entry name" value="Sulphur_relay_TusB/DsrH"/>
</dbReference>
<dbReference type="NCBIfam" id="NF010035">
    <property type="entry name" value="PRK13510.1"/>
    <property type="match status" value="1"/>
</dbReference>
<dbReference type="NCBIfam" id="TIGR03011">
    <property type="entry name" value="sulf_tusB_dsrH"/>
    <property type="match status" value="1"/>
</dbReference>
<dbReference type="PANTHER" id="PTHR37526">
    <property type="entry name" value="PROTEIN TUSB"/>
    <property type="match status" value="1"/>
</dbReference>
<dbReference type="PANTHER" id="PTHR37526:SF1">
    <property type="entry name" value="PROTEIN TUSB"/>
    <property type="match status" value="1"/>
</dbReference>
<dbReference type="Pfam" id="PF04077">
    <property type="entry name" value="DsrH"/>
    <property type="match status" value="1"/>
</dbReference>
<dbReference type="SUPFAM" id="SSF75169">
    <property type="entry name" value="DsrEFH-like"/>
    <property type="match status" value="1"/>
</dbReference>
<accession>B1IPV6</accession>
<evidence type="ECO:0000255" key="1">
    <source>
        <dbReference type="HAMAP-Rule" id="MF_01564"/>
    </source>
</evidence>
<sequence>MLHTLHRSPWLTDFAALLRLLSEGDELLLLQDGVTAAVDGNRYLESLRNAPIKVYALNEDLIARGLTGQISNDIILIDYTDFVRLTVKHPSQMVW</sequence>
<feature type="chain" id="PRO_1000087818" description="Protein TusB">
    <location>
        <begin position="1"/>
        <end position="95"/>
    </location>
</feature>
<keyword id="KW-0963">Cytoplasm</keyword>
<keyword id="KW-0819">tRNA processing</keyword>
<protein>
    <recommendedName>
        <fullName evidence="1">Protein TusB</fullName>
    </recommendedName>
    <alternativeName>
        <fullName evidence="1">tRNA 2-thiouridine synthesizing protein B</fullName>
    </alternativeName>
</protein>